<keyword id="KW-0255">Endonuclease</keyword>
<keyword id="KW-0378">Hydrolase</keyword>
<keyword id="KW-0540">Nuclease</keyword>
<keyword id="KW-1185">Reference proteome</keyword>
<keyword id="KW-0694">RNA-binding</keyword>
<keyword id="KW-0819">tRNA processing</keyword>
<organism>
    <name type="scientific">Corynebacterium glutamicum (strain ATCC 13032 / DSM 20300 / JCM 1318 / BCRC 11384 / CCUG 27702 / LMG 3730 / NBRC 12168 / NCIMB 10025 / NRRL B-2784 / 534)</name>
    <dbReference type="NCBI Taxonomy" id="196627"/>
    <lineage>
        <taxon>Bacteria</taxon>
        <taxon>Bacillati</taxon>
        <taxon>Actinomycetota</taxon>
        <taxon>Actinomycetes</taxon>
        <taxon>Mycobacteriales</taxon>
        <taxon>Corynebacteriaceae</taxon>
        <taxon>Corynebacterium</taxon>
    </lineage>
</organism>
<comment type="function">
    <text evidence="1">RNaseP catalyzes the removal of the 5'-leader sequence from pre-tRNA to produce the mature 5'-terminus. It can also cleave other RNA substrates such as 4.5S RNA. The protein component plays an auxiliary but essential role in vivo by binding to the 5'-leader sequence and broadening the substrate specificity of the ribozyme.</text>
</comment>
<comment type="catalytic activity">
    <reaction evidence="1">
        <text>Endonucleolytic cleavage of RNA, removing 5'-extranucleotides from tRNA precursor.</text>
        <dbReference type="EC" id="3.1.26.5"/>
    </reaction>
</comment>
<comment type="subunit">
    <text evidence="1">Consists of a catalytic RNA component (M1 or rnpB) and a protein subunit.</text>
</comment>
<comment type="similarity">
    <text evidence="1">Belongs to the RnpA family.</text>
</comment>
<reference key="1">
    <citation type="journal article" date="2003" name="Appl. Microbiol. Biotechnol.">
        <title>The Corynebacterium glutamicum genome: features and impacts on biotechnological processes.</title>
        <authorList>
            <person name="Ikeda M."/>
            <person name="Nakagawa S."/>
        </authorList>
    </citation>
    <scope>NUCLEOTIDE SEQUENCE [LARGE SCALE GENOMIC DNA]</scope>
    <source>
        <strain>ATCC 13032 / DSM 20300 / JCM 1318 / BCRC 11384 / CCUG 27702 / LMG 3730 / NBRC 12168 / NCIMB 10025 / NRRL B-2784 / 534</strain>
    </source>
</reference>
<reference key="2">
    <citation type="journal article" date="2003" name="J. Biotechnol.">
        <title>The complete Corynebacterium glutamicum ATCC 13032 genome sequence and its impact on the production of L-aspartate-derived amino acids and vitamins.</title>
        <authorList>
            <person name="Kalinowski J."/>
            <person name="Bathe B."/>
            <person name="Bartels D."/>
            <person name="Bischoff N."/>
            <person name="Bott M."/>
            <person name="Burkovski A."/>
            <person name="Dusch N."/>
            <person name="Eggeling L."/>
            <person name="Eikmanns B.J."/>
            <person name="Gaigalat L."/>
            <person name="Goesmann A."/>
            <person name="Hartmann M."/>
            <person name="Huthmacher K."/>
            <person name="Kraemer R."/>
            <person name="Linke B."/>
            <person name="McHardy A.C."/>
            <person name="Meyer F."/>
            <person name="Moeckel B."/>
            <person name="Pfefferle W."/>
            <person name="Puehler A."/>
            <person name="Rey D.A."/>
            <person name="Rueckert C."/>
            <person name="Rupp O."/>
            <person name="Sahm H."/>
            <person name="Wendisch V.F."/>
            <person name="Wiegraebe I."/>
            <person name="Tauch A."/>
        </authorList>
    </citation>
    <scope>NUCLEOTIDE SEQUENCE [LARGE SCALE GENOMIC DNA]</scope>
    <source>
        <strain>ATCC 13032 / DSM 20300 / JCM 1318 / BCRC 11384 / CCUG 27702 / LMG 3730 / NBRC 12168 / NCIMB 10025 / NRRL B-2784 / 534</strain>
    </source>
</reference>
<accession>Q8NL51</accession>
<protein>
    <recommendedName>
        <fullName evidence="1">Ribonuclease P protein component</fullName>
        <shortName evidence="1">RNase P protein</shortName>
        <shortName evidence="1">RNaseP protein</shortName>
        <ecNumber evidence="1">3.1.26.5</ecNumber>
    </recommendedName>
    <alternativeName>
        <fullName evidence="1">Protein C5</fullName>
    </alternativeName>
</protein>
<evidence type="ECO:0000255" key="1">
    <source>
        <dbReference type="HAMAP-Rule" id="MF_00227"/>
    </source>
</evidence>
<sequence length="133" mass="14481">MLPAQHKLNSSMQFRTVMRKGRRAGSKTVVVHLWDSAESLDGTEKQGEVASFGGPRFGLVVSKAVGNAVVRHRTSRRLRHICASIAEKSPELLSPTHHVVIRALAGAGNATSAELERDIRYGLGKASRVRTNK</sequence>
<dbReference type="EC" id="3.1.26.5" evidence="1"/>
<dbReference type="EMBL" id="BA000036">
    <property type="protein sequence ID" value="BAC00492.1"/>
    <property type="molecule type" value="Genomic_DNA"/>
</dbReference>
<dbReference type="EMBL" id="BX927157">
    <property type="protein sequence ID" value="CAF19038.1"/>
    <property type="molecule type" value="Genomic_DNA"/>
</dbReference>
<dbReference type="RefSeq" id="NP_602290.1">
    <property type="nucleotide sequence ID" value="NC_003450.3"/>
</dbReference>
<dbReference type="RefSeq" id="WP_003860977.1">
    <property type="nucleotide sequence ID" value="NC_006958.1"/>
</dbReference>
<dbReference type="SMR" id="Q8NL51"/>
<dbReference type="STRING" id="196627.cg3431"/>
<dbReference type="GeneID" id="1021042"/>
<dbReference type="KEGG" id="cgb:cg3431"/>
<dbReference type="KEGG" id="cgl:Cgl3098"/>
<dbReference type="PATRIC" id="fig|196627.13.peg.3032"/>
<dbReference type="eggNOG" id="COG0594">
    <property type="taxonomic scope" value="Bacteria"/>
</dbReference>
<dbReference type="HOGENOM" id="CLU_117179_4_1_11"/>
<dbReference type="OrthoDB" id="196964at2"/>
<dbReference type="BioCyc" id="CORYNE:G18NG-12719-MONOMER"/>
<dbReference type="Proteomes" id="UP000000582">
    <property type="component" value="Chromosome"/>
</dbReference>
<dbReference type="Proteomes" id="UP000001009">
    <property type="component" value="Chromosome"/>
</dbReference>
<dbReference type="GO" id="GO:0030677">
    <property type="term" value="C:ribonuclease P complex"/>
    <property type="evidence" value="ECO:0007669"/>
    <property type="project" value="TreeGrafter"/>
</dbReference>
<dbReference type="GO" id="GO:0042781">
    <property type="term" value="F:3'-tRNA processing endoribonuclease activity"/>
    <property type="evidence" value="ECO:0007669"/>
    <property type="project" value="TreeGrafter"/>
</dbReference>
<dbReference type="GO" id="GO:0004526">
    <property type="term" value="F:ribonuclease P activity"/>
    <property type="evidence" value="ECO:0007669"/>
    <property type="project" value="UniProtKB-UniRule"/>
</dbReference>
<dbReference type="GO" id="GO:0000049">
    <property type="term" value="F:tRNA binding"/>
    <property type="evidence" value="ECO:0007669"/>
    <property type="project" value="UniProtKB-UniRule"/>
</dbReference>
<dbReference type="GO" id="GO:0001682">
    <property type="term" value="P:tRNA 5'-leader removal"/>
    <property type="evidence" value="ECO:0007669"/>
    <property type="project" value="UniProtKB-UniRule"/>
</dbReference>
<dbReference type="Gene3D" id="3.30.230.10">
    <property type="match status" value="1"/>
</dbReference>
<dbReference type="HAMAP" id="MF_00227">
    <property type="entry name" value="RNase_P"/>
    <property type="match status" value="1"/>
</dbReference>
<dbReference type="InterPro" id="IPR020568">
    <property type="entry name" value="Ribosomal_Su5_D2-typ_SF"/>
</dbReference>
<dbReference type="InterPro" id="IPR014721">
    <property type="entry name" value="Ribsml_uS5_D2-typ_fold_subgr"/>
</dbReference>
<dbReference type="InterPro" id="IPR000100">
    <property type="entry name" value="RNase_P"/>
</dbReference>
<dbReference type="NCBIfam" id="TIGR00188">
    <property type="entry name" value="rnpA"/>
    <property type="match status" value="1"/>
</dbReference>
<dbReference type="PANTHER" id="PTHR33992">
    <property type="entry name" value="RIBONUCLEASE P PROTEIN COMPONENT"/>
    <property type="match status" value="1"/>
</dbReference>
<dbReference type="PANTHER" id="PTHR33992:SF1">
    <property type="entry name" value="RIBONUCLEASE P PROTEIN COMPONENT"/>
    <property type="match status" value="1"/>
</dbReference>
<dbReference type="Pfam" id="PF00825">
    <property type="entry name" value="Ribonuclease_P"/>
    <property type="match status" value="1"/>
</dbReference>
<dbReference type="SUPFAM" id="SSF54211">
    <property type="entry name" value="Ribosomal protein S5 domain 2-like"/>
    <property type="match status" value="1"/>
</dbReference>
<proteinExistence type="inferred from homology"/>
<name>RNPA_CORGL</name>
<gene>
    <name evidence="1" type="primary">rnpA</name>
    <name type="ordered locus">Cgl3098</name>
    <name type="ordered locus">cg3431</name>
</gene>
<feature type="chain" id="PRO_0000198454" description="Ribonuclease P protein component">
    <location>
        <begin position="1"/>
        <end position="133"/>
    </location>
</feature>